<reference key="1">
    <citation type="journal article" date="2006" name="Nat. Biotechnol.">
        <title>Genome sequence of the bioplastic-producing 'Knallgas' bacterium Ralstonia eutropha H16.</title>
        <authorList>
            <person name="Pohlmann A."/>
            <person name="Fricke W.F."/>
            <person name="Reinecke F."/>
            <person name="Kusian B."/>
            <person name="Liesegang H."/>
            <person name="Cramm R."/>
            <person name="Eitinger T."/>
            <person name="Ewering C."/>
            <person name="Poetter M."/>
            <person name="Schwartz E."/>
            <person name="Strittmatter A."/>
            <person name="Voss I."/>
            <person name="Gottschalk G."/>
            <person name="Steinbuechel A."/>
            <person name="Friedrich B."/>
            <person name="Bowien B."/>
        </authorList>
    </citation>
    <scope>NUCLEOTIDE SEQUENCE [LARGE SCALE GENOMIC DNA]</scope>
    <source>
        <strain>ATCC 17699 / DSM 428 / KCTC 22496 / NCIMB 10442 / H16 / Stanier 337</strain>
    </source>
</reference>
<feature type="chain" id="PRO_1000021225" description="Recombination-associated protein RdgC">
    <location>
        <begin position="1"/>
        <end position="299"/>
    </location>
</feature>
<accession>Q0K6V7</accession>
<dbReference type="EMBL" id="AM260479">
    <property type="protein sequence ID" value="CAJ94264.1"/>
    <property type="molecule type" value="Genomic_DNA"/>
</dbReference>
<dbReference type="RefSeq" id="WP_010813167.1">
    <property type="nucleotide sequence ID" value="NZ_CP039287.1"/>
</dbReference>
<dbReference type="SMR" id="Q0K6V7"/>
<dbReference type="STRING" id="381666.H16_A3189"/>
<dbReference type="KEGG" id="reh:H16_A3189"/>
<dbReference type="eggNOG" id="COG2974">
    <property type="taxonomic scope" value="Bacteria"/>
</dbReference>
<dbReference type="HOGENOM" id="CLU_052038_1_1_4"/>
<dbReference type="OrthoDB" id="5290530at2"/>
<dbReference type="Proteomes" id="UP000008210">
    <property type="component" value="Chromosome 1"/>
</dbReference>
<dbReference type="GO" id="GO:0043590">
    <property type="term" value="C:bacterial nucleoid"/>
    <property type="evidence" value="ECO:0007669"/>
    <property type="project" value="TreeGrafter"/>
</dbReference>
<dbReference type="GO" id="GO:0005737">
    <property type="term" value="C:cytoplasm"/>
    <property type="evidence" value="ECO:0007669"/>
    <property type="project" value="UniProtKB-UniRule"/>
</dbReference>
<dbReference type="GO" id="GO:0003690">
    <property type="term" value="F:double-stranded DNA binding"/>
    <property type="evidence" value="ECO:0007669"/>
    <property type="project" value="TreeGrafter"/>
</dbReference>
<dbReference type="GO" id="GO:0006310">
    <property type="term" value="P:DNA recombination"/>
    <property type="evidence" value="ECO:0007669"/>
    <property type="project" value="UniProtKB-UniRule"/>
</dbReference>
<dbReference type="GO" id="GO:0000018">
    <property type="term" value="P:regulation of DNA recombination"/>
    <property type="evidence" value="ECO:0007669"/>
    <property type="project" value="TreeGrafter"/>
</dbReference>
<dbReference type="HAMAP" id="MF_00194">
    <property type="entry name" value="RdgC"/>
    <property type="match status" value="1"/>
</dbReference>
<dbReference type="InterPro" id="IPR007476">
    <property type="entry name" value="RdgC"/>
</dbReference>
<dbReference type="NCBIfam" id="NF001463">
    <property type="entry name" value="PRK00321.1-4"/>
    <property type="match status" value="1"/>
</dbReference>
<dbReference type="NCBIfam" id="NF001464">
    <property type="entry name" value="PRK00321.1-5"/>
    <property type="match status" value="1"/>
</dbReference>
<dbReference type="PANTHER" id="PTHR38103">
    <property type="entry name" value="RECOMBINATION-ASSOCIATED PROTEIN RDGC"/>
    <property type="match status" value="1"/>
</dbReference>
<dbReference type="PANTHER" id="PTHR38103:SF1">
    <property type="entry name" value="RECOMBINATION-ASSOCIATED PROTEIN RDGC"/>
    <property type="match status" value="1"/>
</dbReference>
<dbReference type="Pfam" id="PF04381">
    <property type="entry name" value="RdgC"/>
    <property type="match status" value="1"/>
</dbReference>
<comment type="function">
    <text evidence="1">May be involved in recombination.</text>
</comment>
<comment type="subcellular location">
    <subcellularLocation>
        <location evidence="1">Cytoplasm</location>
        <location evidence="1">Nucleoid</location>
    </subcellularLocation>
</comment>
<comment type="similarity">
    <text evidence="1">Belongs to the RdgC family.</text>
</comment>
<organism>
    <name type="scientific">Cupriavidus necator (strain ATCC 17699 / DSM 428 / KCTC 22496 / NCIMB 10442 / H16 / Stanier 337)</name>
    <name type="common">Ralstonia eutropha</name>
    <dbReference type="NCBI Taxonomy" id="381666"/>
    <lineage>
        <taxon>Bacteria</taxon>
        <taxon>Pseudomonadati</taxon>
        <taxon>Pseudomonadota</taxon>
        <taxon>Betaproteobacteria</taxon>
        <taxon>Burkholderiales</taxon>
        <taxon>Burkholderiaceae</taxon>
        <taxon>Cupriavidus</taxon>
    </lineage>
</organism>
<gene>
    <name evidence="1" type="primary">rdgC</name>
    <name type="ordered locus">H16_A3189</name>
</gene>
<sequence>MWFKNLQVHRFSAPWSLSADEVEASLAKHAFFPGTSLEMQTQGWASPRDNGQLVHTVGGQMLLTLRTEKKLLPTTVVNQVTRARAAEIEEQQGYKPGRKQMKELKEQVTEELLPRAFSIRRDTRVWIDPDNGWLAIDAAATAKADEVRGMLFKALDPLPLINLHVNQSPVAAMTEWLAGDAAPGGFTVDQEIELQSGAESKATVRYVRHPLDPEDLRRHIAAGKRCTRLAMTWNDRVSFVLTDGLVVKKVAPLDVIKEQADGTAHDEDERFDADFTMMAGELSGMLGDLTEALGGERKA</sequence>
<protein>
    <recommendedName>
        <fullName evidence="1">Recombination-associated protein RdgC</fullName>
    </recommendedName>
</protein>
<name>RDGC_CUPNH</name>
<keyword id="KW-0963">Cytoplasm</keyword>
<keyword id="KW-0233">DNA recombination</keyword>
<keyword id="KW-1185">Reference proteome</keyword>
<evidence type="ECO:0000255" key="1">
    <source>
        <dbReference type="HAMAP-Rule" id="MF_00194"/>
    </source>
</evidence>
<proteinExistence type="inferred from homology"/>